<protein>
    <recommendedName>
        <fullName evidence="1">Tol-Pal system protein TolB</fullName>
    </recommendedName>
</protein>
<sequence>MRNLLRGMLVVICCMAGIAAADEKNILVTSGSDRATPIAVVPFGWQGGSVLPDDMAQIVSDDLRNSGYYAPIPKGNMISQPNQASEVVFRDWKAVGAQYLMVGNITPAGGRLQIQYTLFNVATEQQVLTGSVSGTAEQLRDMAHYISDQSFEKLTGIKGAFSTRLLYVTAERFSVDNTRYTLQRSDYDGARAVTLLQSREPILSPRFAPDGKRIAYVSFEQRRPRIFVQHIDTGRREQITNFEGLNGAPAWSPDGSRLAFVLSKDGNPDIYVMNMASRQISRVTSGPGINTEPFWGKDGSTIYFTSDRGGKPQVYKANVNGGGAERVTFIGNYNANPKLSADEKTLVMIHRQDGFTNFRVAAQDLQRGTVKILTDTNLDESATVAPNGTMVIYATRQQGRGVLMLVSINGRVRLPLPTAQGEVREPSWSPYLN</sequence>
<keyword id="KW-0131">Cell cycle</keyword>
<keyword id="KW-0132">Cell division</keyword>
<keyword id="KW-0574">Periplasm</keyword>
<keyword id="KW-0732">Signal</keyword>
<proteinExistence type="inferred from homology"/>
<accession>C3JYS2</accession>
<feature type="signal peptide" evidence="1">
    <location>
        <begin position="1"/>
        <end position="21"/>
    </location>
</feature>
<feature type="chain" id="PRO_5000459123" description="Tol-Pal system protein TolB" evidence="1">
    <location>
        <begin position="22"/>
        <end position="433"/>
    </location>
</feature>
<reference key="1">
    <citation type="journal article" date="2009" name="Genome Biol.">
        <title>Genomic and genetic analyses of diversity and plant interactions of Pseudomonas fluorescens.</title>
        <authorList>
            <person name="Silby M.W."/>
            <person name="Cerdeno-Tarraga A.M."/>
            <person name="Vernikos G.S."/>
            <person name="Giddens S.R."/>
            <person name="Jackson R.W."/>
            <person name="Preston G.M."/>
            <person name="Zhang X.-X."/>
            <person name="Moon C.D."/>
            <person name="Gehrig S.M."/>
            <person name="Godfrey S.A.C."/>
            <person name="Knight C.G."/>
            <person name="Malone J.G."/>
            <person name="Robinson Z."/>
            <person name="Spiers A.J."/>
            <person name="Harris S."/>
            <person name="Challis G.L."/>
            <person name="Yaxley A.M."/>
            <person name="Harris D."/>
            <person name="Seeger K."/>
            <person name="Murphy L."/>
            <person name="Rutter S."/>
            <person name="Squares R."/>
            <person name="Quail M.A."/>
            <person name="Saunders E."/>
            <person name="Mavromatis K."/>
            <person name="Brettin T.S."/>
            <person name="Bentley S.D."/>
            <person name="Hothersall J."/>
            <person name="Stephens E."/>
            <person name="Thomas C.M."/>
            <person name="Parkhill J."/>
            <person name="Levy S.B."/>
            <person name="Rainey P.B."/>
            <person name="Thomson N.R."/>
        </authorList>
    </citation>
    <scope>NUCLEOTIDE SEQUENCE [LARGE SCALE GENOMIC DNA]</scope>
    <source>
        <strain>SBW25</strain>
    </source>
</reference>
<comment type="function">
    <text evidence="1">Part of the Tol-Pal system, which plays a role in outer membrane invagination during cell division and is important for maintaining outer membrane integrity.</text>
</comment>
<comment type="subunit">
    <text evidence="1">The Tol-Pal system is composed of five core proteins: the inner membrane proteins TolA, TolQ and TolR, the periplasmic protein TolB and the outer membrane protein Pal. They form a network linking the inner and outer membranes and the peptidoglycan layer.</text>
</comment>
<comment type="subcellular location">
    <subcellularLocation>
        <location evidence="1">Periplasm</location>
    </subcellularLocation>
</comment>
<comment type="similarity">
    <text evidence="1">Belongs to the TolB family.</text>
</comment>
<organism>
    <name type="scientific">Pseudomonas fluorescens (strain SBW25)</name>
    <dbReference type="NCBI Taxonomy" id="216595"/>
    <lineage>
        <taxon>Bacteria</taxon>
        <taxon>Pseudomonadati</taxon>
        <taxon>Pseudomonadota</taxon>
        <taxon>Gammaproteobacteria</taxon>
        <taxon>Pseudomonadales</taxon>
        <taxon>Pseudomonadaceae</taxon>
        <taxon>Pseudomonas</taxon>
    </lineage>
</organism>
<evidence type="ECO:0000255" key="1">
    <source>
        <dbReference type="HAMAP-Rule" id="MF_00671"/>
    </source>
</evidence>
<gene>
    <name evidence="1" type="primary">tolB</name>
    <name type="ordered locus">PFLU_4908</name>
</gene>
<name>TOLB_PSEFS</name>
<dbReference type="EMBL" id="AM181176">
    <property type="protein sequence ID" value="CAY51810.1"/>
    <property type="molecule type" value="Genomic_DNA"/>
</dbReference>
<dbReference type="SMR" id="C3JYS2"/>
<dbReference type="STRING" id="294.SRM1_04339"/>
<dbReference type="eggNOG" id="COG0823">
    <property type="taxonomic scope" value="Bacteria"/>
</dbReference>
<dbReference type="HOGENOM" id="CLU_047123_0_0_6"/>
<dbReference type="OrthoDB" id="9802240at2"/>
<dbReference type="GO" id="GO:0042597">
    <property type="term" value="C:periplasmic space"/>
    <property type="evidence" value="ECO:0007669"/>
    <property type="project" value="UniProtKB-SubCell"/>
</dbReference>
<dbReference type="GO" id="GO:0051301">
    <property type="term" value="P:cell division"/>
    <property type="evidence" value="ECO:0007669"/>
    <property type="project" value="UniProtKB-UniRule"/>
</dbReference>
<dbReference type="GO" id="GO:0017038">
    <property type="term" value="P:protein import"/>
    <property type="evidence" value="ECO:0007669"/>
    <property type="project" value="InterPro"/>
</dbReference>
<dbReference type="Gene3D" id="2.120.10.30">
    <property type="entry name" value="TolB, C-terminal domain"/>
    <property type="match status" value="1"/>
</dbReference>
<dbReference type="Gene3D" id="3.40.50.10070">
    <property type="entry name" value="TolB, N-terminal domain"/>
    <property type="match status" value="1"/>
</dbReference>
<dbReference type="HAMAP" id="MF_00671">
    <property type="entry name" value="TolB"/>
    <property type="match status" value="1"/>
</dbReference>
<dbReference type="InterPro" id="IPR011042">
    <property type="entry name" value="6-blade_b-propeller_TolB-like"/>
</dbReference>
<dbReference type="InterPro" id="IPR011659">
    <property type="entry name" value="PD40"/>
</dbReference>
<dbReference type="InterPro" id="IPR014167">
    <property type="entry name" value="Tol-Pal_TolB"/>
</dbReference>
<dbReference type="InterPro" id="IPR007195">
    <property type="entry name" value="TolB_N"/>
</dbReference>
<dbReference type="NCBIfam" id="TIGR02800">
    <property type="entry name" value="propeller_TolB"/>
    <property type="match status" value="1"/>
</dbReference>
<dbReference type="PANTHER" id="PTHR36842:SF1">
    <property type="entry name" value="PROTEIN TOLB"/>
    <property type="match status" value="1"/>
</dbReference>
<dbReference type="PANTHER" id="PTHR36842">
    <property type="entry name" value="PROTEIN TOLB HOMOLOG"/>
    <property type="match status" value="1"/>
</dbReference>
<dbReference type="Pfam" id="PF07676">
    <property type="entry name" value="PD40"/>
    <property type="match status" value="3"/>
</dbReference>
<dbReference type="Pfam" id="PF04052">
    <property type="entry name" value="TolB_N"/>
    <property type="match status" value="1"/>
</dbReference>
<dbReference type="SUPFAM" id="SSF52964">
    <property type="entry name" value="TolB, N-terminal domain"/>
    <property type="match status" value="1"/>
</dbReference>
<dbReference type="SUPFAM" id="SSF69304">
    <property type="entry name" value="Tricorn protease N-terminal domain"/>
    <property type="match status" value="1"/>
</dbReference>